<keyword id="KW-0012">Acyltransferase</keyword>
<keyword id="KW-1003">Cell membrane</keyword>
<keyword id="KW-0472">Membrane</keyword>
<keyword id="KW-0808">Transferase</keyword>
<keyword id="KW-0812">Transmembrane</keyword>
<keyword id="KW-1133">Transmembrane helix</keyword>
<gene>
    <name evidence="1" type="primary">mdoC</name>
    <name evidence="1" type="synonym">opgC</name>
    <name type="ordered locus">ECED1_1191</name>
</gene>
<comment type="function">
    <text evidence="1">Necessary for the succinyl substitution of periplasmic glucans. Could catalyze the transfer of succinyl residues from the cytoplasmic side of the membrane to the nascent glucan backbones on the periplasmic side of the membrane.</text>
</comment>
<comment type="pathway">
    <text evidence="1">Glycan metabolism; osmoregulated periplasmic glucan (OPG) biosynthesis.</text>
</comment>
<comment type="subcellular location">
    <subcellularLocation>
        <location evidence="1">Cell membrane</location>
        <topology evidence="1">Multi-pass membrane protein</topology>
    </subcellularLocation>
</comment>
<comment type="similarity">
    <text evidence="1">Belongs to the acyltransferase 3 family. OpgC subfamily.</text>
</comment>
<dbReference type="EC" id="2.1.-.-" evidence="1"/>
<dbReference type="EMBL" id="CU928162">
    <property type="protein sequence ID" value="CAR07392.1"/>
    <property type="molecule type" value="Genomic_DNA"/>
</dbReference>
<dbReference type="RefSeq" id="WP_001070355.1">
    <property type="nucleotide sequence ID" value="NC_011745.1"/>
</dbReference>
<dbReference type="KEGG" id="ecq:ECED1_1191"/>
<dbReference type="HOGENOM" id="CLU_036182_2_0_6"/>
<dbReference type="UniPathway" id="UPA00637"/>
<dbReference type="Proteomes" id="UP000000748">
    <property type="component" value="Chromosome"/>
</dbReference>
<dbReference type="GO" id="GO:0005886">
    <property type="term" value="C:plasma membrane"/>
    <property type="evidence" value="ECO:0007669"/>
    <property type="project" value="UniProtKB-SubCell"/>
</dbReference>
<dbReference type="GO" id="GO:0016747">
    <property type="term" value="F:acyltransferase activity, transferring groups other than amino-acyl groups"/>
    <property type="evidence" value="ECO:0007669"/>
    <property type="project" value="InterPro"/>
</dbReference>
<dbReference type="GO" id="GO:0016741">
    <property type="term" value="F:transferase activity, transferring one-carbon groups"/>
    <property type="evidence" value="ECO:0007669"/>
    <property type="project" value="UniProtKB-UniRule"/>
</dbReference>
<dbReference type="GO" id="GO:0009250">
    <property type="term" value="P:glucan biosynthetic process"/>
    <property type="evidence" value="ECO:0007669"/>
    <property type="project" value="UniProtKB-UniRule"/>
</dbReference>
<dbReference type="HAMAP" id="MF_01066">
    <property type="entry name" value="MdoC_OpgC"/>
    <property type="match status" value="1"/>
</dbReference>
<dbReference type="InterPro" id="IPR002656">
    <property type="entry name" value="Acyl_transf_3_dom"/>
</dbReference>
<dbReference type="InterPro" id="IPR050623">
    <property type="entry name" value="Glucan_succinyl_AcylTrfase"/>
</dbReference>
<dbReference type="InterPro" id="IPR023723">
    <property type="entry name" value="Glucans_biosynth_C"/>
</dbReference>
<dbReference type="NCBIfam" id="NF003014">
    <property type="entry name" value="PRK03854.1"/>
    <property type="match status" value="1"/>
</dbReference>
<dbReference type="PANTHER" id="PTHR36927">
    <property type="entry name" value="BLR4337 PROTEIN"/>
    <property type="match status" value="1"/>
</dbReference>
<dbReference type="PANTHER" id="PTHR36927:SF3">
    <property type="entry name" value="GLUCANS BIOSYNTHESIS PROTEIN C"/>
    <property type="match status" value="1"/>
</dbReference>
<dbReference type="Pfam" id="PF01757">
    <property type="entry name" value="Acyl_transf_3"/>
    <property type="match status" value="1"/>
</dbReference>
<protein>
    <recommendedName>
        <fullName evidence="1">Glucans biosynthesis protein C</fullName>
        <ecNumber evidence="1">2.1.-.-</ecNumber>
    </recommendedName>
</protein>
<evidence type="ECO:0000255" key="1">
    <source>
        <dbReference type="HAMAP-Rule" id="MF_01066"/>
    </source>
</evidence>
<name>OPGC_ECO81</name>
<reference key="1">
    <citation type="journal article" date="2009" name="PLoS Genet.">
        <title>Organised genome dynamics in the Escherichia coli species results in highly diverse adaptive paths.</title>
        <authorList>
            <person name="Touchon M."/>
            <person name="Hoede C."/>
            <person name="Tenaillon O."/>
            <person name="Barbe V."/>
            <person name="Baeriswyl S."/>
            <person name="Bidet P."/>
            <person name="Bingen E."/>
            <person name="Bonacorsi S."/>
            <person name="Bouchier C."/>
            <person name="Bouvet O."/>
            <person name="Calteau A."/>
            <person name="Chiapello H."/>
            <person name="Clermont O."/>
            <person name="Cruveiller S."/>
            <person name="Danchin A."/>
            <person name="Diard M."/>
            <person name="Dossat C."/>
            <person name="Karoui M.E."/>
            <person name="Frapy E."/>
            <person name="Garry L."/>
            <person name="Ghigo J.M."/>
            <person name="Gilles A.M."/>
            <person name="Johnson J."/>
            <person name="Le Bouguenec C."/>
            <person name="Lescat M."/>
            <person name="Mangenot S."/>
            <person name="Martinez-Jehanne V."/>
            <person name="Matic I."/>
            <person name="Nassif X."/>
            <person name="Oztas S."/>
            <person name="Petit M.A."/>
            <person name="Pichon C."/>
            <person name="Rouy Z."/>
            <person name="Ruf C.S."/>
            <person name="Schneider D."/>
            <person name="Tourret J."/>
            <person name="Vacherie B."/>
            <person name="Vallenet D."/>
            <person name="Medigue C."/>
            <person name="Rocha E.P.C."/>
            <person name="Denamur E."/>
        </authorList>
    </citation>
    <scope>NUCLEOTIDE SEQUENCE [LARGE SCALE GENOMIC DNA]</scope>
    <source>
        <strain>ED1a</strain>
    </source>
</reference>
<sequence length="385" mass="44684">MNPVPAQREYFLDSIRAWLMLLGIPFHISLIYSSHTWHVNSAEPSLWLTLFNDFIHSFRMQVFFVISGYFSYMLFLRYPLKKWWKVRVERVGIPMLTAIPLLTLPQFIMLQYVKGKAESWPGLSLYDKYNTLAWELISHLWFLLVLVVMTTLCVWIFKRIRNNLENSDKTNKKFSMVKLSVIFLCLGIGYAVIRRTIFIVYPPILSNGMFNFIVMQTLFYLPFFILGALAFIFPHLKALFTTPSRGSTLAAALAFVAYLLNQRYGSGDAWMYETESVITMVLGLWMVNVVFSFGHRLLNFQSARVTYFVNASLFIYLVHHPLTLFFGAYITPHITSNWLGFLCGLIFVVGIAIILYEIHLRIPLLKFLFSGKPVVKRENDKAPAR</sequence>
<accession>B7MTH8</accession>
<feature type="chain" id="PRO_1000149737" description="Glucans biosynthesis protein C">
    <location>
        <begin position="1"/>
        <end position="385"/>
    </location>
</feature>
<feature type="transmembrane region" description="Helical" evidence="1">
    <location>
        <begin position="17"/>
        <end position="37"/>
    </location>
</feature>
<feature type="transmembrane region" description="Helical" evidence="1">
    <location>
        <begin position="60"/>
        <end position="80"/>
    </location>
</feature>
<feature type="transmembrane region" description="Helical" evidence="1">
    <location>
        <begin position="91"/>
        <end position="111"/>
    </location>
</feature>
<feature type="transmembrane region" description="Helical" evidence="1">
    <location>
        <begin position="137"/>
        <end position="157"/>
    </location>
</feature>
<feature type="transmembrane region" description="Helical" evidence="1">
    <location>
        <begin position="173"/>
        <end position="193"/>
    </location>
</feature>
<feature type="transmembrane region" description="Helical" evidence="1">
    <location>
        <begin position="212"/>
        <end position="232"/>
    </location>
</feature>
<feature type="transmembrane region" description="Helical" evidence="1">
    <location>
        <begin position="245"/>
        <end position="262"/>
    </location>
</feature>
<feature type="transmembrane region" description="Helical" evidence="1">
    <location>
        <begin position="274"/>
        <end position="294"/>
    </location>
</feature>
<feature type="transmembrane region" description="Helical" evidence="1">
    <location>
        <begin position="311"/>
        <end position="331"/>
    </location>
</feature>
<feature type="transmembrane region" description="Helical" evidence="1">
    <location>
        <begin position="338"/>
        <end position="358"/>
    </location>
</feature>
<proteinExistence type="inferred from homology"/>
<organism>
    <name type="scientific">Escherichia coli O81 (strain ED1a)</name>
    <dbReference type="NCBI Taxonomy" id="585397"/>
    <lineage>
        <taxon>Bacteria</taxon>
        <taxon>Pseudomonadati</taxon>
        <taxon>Pseudomonadota</taxon>
        <taxon>Gammaproteobacteria</taxon>
        <taxon>Enterobacterales</taxon>
        <taxon>Enterobacteriaceae</taxon>
        <taxon>Escherichia</taxon>
    </lineage>
</organism>